<proteinExistence type="inferred from homology"/>
<dbReference type="EMBL" id="CP001173">
    <property type="protein sequence ID" value="ACI26870.1"/>
    <property type="molecule type" value="Genomic_DNA"/>
</dbReference>
<dbReference type="RefSeq" id="WP_000521046.1">
    <property type="nucleotide sequence ID" value="NC_011333.1"/>
</dbReference>
<dbReference type="SMR" id="B5Z9P0"/>
<dbReference type="KEGG" id="hpg:HPG27_101"/>
<dbReference type="HOGENOM" id="CLU_005965_2_1_7"/>
<dbReference type="Proteomes" id="UP000001735">
    <property type="component" value="Chromosome"/>
</dbReference>
<dbReference type="GO" id="GO:0005524">
    <property type="term" value="F:ATP binding"/>
    <property type="evidence" value="ECO:0007669"/>
    <property type="project" value="UniProtKB-UniRule"/>
</dbReference>
<dbReference type="GO" id="GO:0140662">
    <property type="term" value="F:ATP-dependent protein folding chaperone"/>
    <property type="evidence" value="ECO:0007669"/>
    <property type="project" value="InterPro"/>
</dbReference>
<dbReference type="GO" id="GO:0051082">
    <property type="term" value="F:unfolded protein binding"/>
    <property type="evidence" value="ECO:0007669"/>
    <property type="project" value="InterPro"/>
</dbReference>
<dbReference type="CDD" id="cd10234">
    <property type="entry name" value="ASKHA_NBD_HSP70_DnaK-like"/>
    <property type="match status" value="1"/>
</dbReference>
<dbReference type="FunFam" id="2.60.34.10:FF:000014">
    <property type="entry name" value="Chaperone protein DnaK HSP70"/>
    <property type="match status" value="1"/>
</dbReference>
<dbReference type="FunFam" id="1.20.1270.10:FF:000001">
    <property type="entry name" value="Molecular chaperone DnaK"/>
    <property type="match status" value="1"/>
</dbReference>
<dbReference type="FunFam" id="3.30.420.40:FF:000004">
    <property type="entry name" value="Molecular chaperone DnaK"/>
    <property type="match status" value="1"/>
</dbReference>
<dbReference type="FunFam" id="3.90.640.10:FF:000003">
    <property type="entry name" value="Molecular chaperone DnaK"/>
    <property type="match status" value="1"/>
</dbReference>
<dbReference type="Gene3D" id="1.20.1270.10">
    <property type="match status" value="1"/>
</dbReference>
<dbReference type="Gene3D" id="3.30.420.40">
    <property type="match status" value="2"/>
</dbReference>
<dbReference type="Gene3D" id="3.90.640.10">
    <property type="entry name" value="Actin, Chain A, domain 4"/>
    <property type="match status" value="1"/>
</dbReference>
<dbReference type="Gene3D" id="2.60.34.10">
    <property type="entry name" value="Substrate Binding Domain Of DNAk, Chain A, domain 1"/>
    <property type="match status" value="1"/>
</dbReference>
<dbReference type="HAMAP" id="MF_00332">
    <property type="entry name" value="DnaK"/>
    <property type="match status" value="1"/>
</dbReference>
<dbReference type="InterPro" id="IPR043129">
    <property type="entry name" value="ATPase_NBD"/>
</dbReference>
<dbReference type="InterPro" id="IPR012725">
    <property type="entry name" value="Chaperone_DnaK"/>
</dbReference>
<dbReference type="InterPro" id="IPR018181">
    <property type="entry name" value="Heat_shock_70_CS"/>
</dbReference>
<dbReference type="InterPro" id="IPR029048">
    <property type="entry name" value="HSP70_C_sf"/>
</dbReference>
<dbReference type="InterPro" id="IPR029047">
    <property type="entry name" value="HSP70_peptide-bd_sf"/>
</dbReference>
<dbReference type="InterPro" id="IPR013126">
    <property type="entry name" value="Hsp_70_fam"/>
</dbReference>
<dbReference type="NCBIfam" id="NF001413">
    <property type="entry name" value="PRK00290.1"/>
    <property type="match status" value="1"/>
</dbReference>
<dbReference type="NCBIfam" id="TIGR02350">
    <property type="entry name" value="prok_dnaK"/>
    <property type="match status" value="1"/>
</dbReference>
<dbReference type="PANTHER" id="PTHR19375">
    <property type="entry name" value="HEAT SHOCK PROTEIN 70KDA"/>
    <property type="match status" value="1"/>
</dbReference>
<dbReference type="Pfam" id="PF00012">
    <property type="entry name" value="HSP70"/>
    <property type="match status" value="1"/>
</dbReference>
<dbReference type="PRINTS" id="PR00301">
    <property type="entry name" value="HEATSHOCK70"/>
</dbReference>
<dbReference type="SUPFAM" id="SSF53067">
    <property type="entry name" value="Actin-like ATPase domain"/>
    <property type="match status" value="2"/>
</dbReference>
<dbReference type="SUPFAM" id="SSF100934">
    <property type="entry name" value="Heat shock protein 70kD (HSP70), C-terminal subdomain"/>
    <property type="match status" value="1"/>
</dbReference>
<dbReference type="SUPFAM" id="SSF100920">
    <property type="entry name" value="Heat shock protein 70kD (HSP70), peptide-binding domain"/>
    <property type="match status" value="1"/>
</dbReference>
<dbReference type="PROSITE" id="PS00297">
    <property type="entry name" value="HSP70_1"/>
    <property type="match status" value="1"/>
</dbReference>
<dbReference type="PROSITE" id="PS00329">
    <property type="entry name" value="HSP70_2"/>
    <property type="match status" value="1"/>
</dbReference>
<dbReference type="PROSITE" id="PS01036">
    <property type="entry name" value="HSP70_3"/>
    <property type="match status" value="1"/>
</dbReference>
<protein>
    <recommendedName>
        <fullName evidence="1">Chaperone protein DnaK</fullName>
    </recommendedName>
    <alternativeName>
        <fullName evidence="1">HSP70</fullName>
    </alternativeName>
    <alternativeName>
        <fullName evidence="1">Heat shock 70 kDa protein</fullName>
    </alternativeName>
    <alternativeName>
        <fullName evidence="1">Heat shock protein 70</fullName>
    </alternativeName>
</protein>
<reference key="1">
    <citation type="journal article" date="2009" name="J. Bacteriol.">
        <title>The complete genome sequence of Helicobacter pylori strain G27.</title>
        <authorList>
            <person name="Baltrus D.A."/>
            <person name="Amieva M.R."/>
            <person name="Covacci A."/>
            <person name="Lowe T.M."/>
            <person name="Merrell D.S."/>
            <person name="Ottemann K.M."/>
            <person name="Stein M."/>
            <person name="Salama N.R."/>
            <person name="Guillemin K."/>
        </authorList>
    </citation>
    <scope>NUCLEOTIDE SEQUENCE [LARGE SCALE GENOMIC DNA]</scope>
    <source>
        <strain>G27</strain>
    </source>
</reference>
<keyword id="KW-0067">ATP-binding</keyword>
<keyword id="KW-0143">Chaperone</keyword>
<keyword id="KW-0547">Nucleotide-binding</keyword>
<keyword id="KW-0597">Phosphoprotein</keyword>
<keyword id="KW-1185">Reference proteome</keyword>
<keyword id="KW-0346">Stress response</keyword>
<accession>B5Z9P0</accession>
<name>DNAK_HELPG</name>
<gene>
    <name evidence="1" type="primary">dnaK</name>
    <name type="ordered locus">HPG27_101</name>
</gene>
<evidence type="ECO:0000255" key="1">
    <source>
        <dbReference type="HAMAP-Rule" id="MF_00332"/>
    </source>
</evidence>
<evidence type="ECO:0000256" key="2">
    <source>
        <dbReference type="SAM" id="MobiDB-lite"/>
    </source>
</evidence>
<comment type="function">
    <text evidence="1">Acts as a chaperone.</text>
</comment>
<comment type="induction">
    <text evidence="1">By stress conditions e.g. heat shock.</text>
</comment>
<comment type="similarity">
    <text evidence="1">Belongs to the heat shock protein 70 family.</text>
</comment>
<feature type="chain" id="PRO_1000119713" description="Chaperone protein DnaK">
    <location>
        <begin position="1"/>
        <end position="620"/>
    </location>
</feature>
<feature type="region of interest" description="Disordered" evidence="2">
    <location>
        <begin position="597"/>
        <end position="620"/>
    </location>
</feature>
<feature type="modified residue" description="Phosphothreonine; by autocatalysis" evidence="1">
    <location>
        <position position="197"/>
    </location>
</feature>
<sequence length="620" mass="67095">MGKVIGIDLGTTNSAMAVYEGNEAKIIANKEGKNTTPSIVAFTDKGEILVGESAKRQAVTNPEKTIYSIKRIMGLMFNEDKAKEAEKRLPYKIVDRNGACAIEISGKVYTPQEISAKILMKLKEDAESYLGESVTEAVITVPAYFNDSQRKATKEAGTIAGLNVLRIINEPTSAALAYGLDKKESEKIMVYDLGGGTFDVTVLETGDNVVEVLATGGDAFLGGDDFDNRVIDFLSAEFKSETGIEIKNDVMALQRLKEAAENAKKELSSAMETEINLPFITADATGPKHLVKKLTRAKFESLTEDLMEETISKIESVIKDAGLTKNEISEVVMVGGSTRIPKVQERVKAFINKDLNKSVNPDEVVAVGASIQGGVLKGDVKDVLLLDVTPLSLGIETLGGVMTKVIDRGTTIPAKKSQVFSTAEDNQPAVSIMVLQGERELARDNKSLGKFDLQGIAPAPRGVPQIEVTFDIDANGILTVSAQDKNTGKSQEIKISGSSGLSDSEIEKMVKDAELHKEEDARKKEVIEARNHADSLAHQTQKSLDEHKTNLNENDANEIQNAINALKDCIKNDNATKAELEDKTKLLAQAAQKLGEAMANKNNAEQPKKKDDDVIDAEVE</sequence>
<organism>
    <name type="scientific">Helicobacter pylori (strain G27)</name>
    <dbReference type="NCBI Taxonomy" id="563041"/>
    <lineage>
        <taxon>Bacteria</taxon>
        <taxon>Pseudomonadati</taxon>
        <taxon>Campylobacterota</taxon>
        <taxon>Epsilonproteobacteria</taxon>
        <taxon>Campylobacterales</taxon>
        <taxon>Helicobacteraceae</taxon>
        <taxon>Helicobacter</taxon>
    </lineage>
</organism>